<protein>
    <recommendedName>
        <fullName>Galactinol synthase 1</fullName>
        <shortName>ArGolS1</shortName>
        <shortName>GolS-1</shortName>
        <ecNumber>2.4.1.123</ecNumber>
    </recommendedName>
</protein>
<reference key="1">
    <citation type="journal article" date="2000" name="Plant J.">
        <title>Allocation of raffinose family oligosaccharides to transport and storage pools in Ajuga reptans: the roles of two distinct galactinol synthases.</title>
        <authorList>
            <person name="Sprenger N."/>
            <person name="Keller F."/>
        </authorList>
    </citation>
    <scope>NUCLEOTIDE SEQUENCE [MRNA]</scope>
    <scope>FUNCTION</scope>
    <scope>TISSUE SPECIFICITY</scope>
    <scope>INDUCTION BY COLD</scope>
    <scope>CATALYTIC ACTIVITY</scope>
</reference>
<accession>Q9XGN4</accession>
<gene>
    <name type="primary">GOLS1</name>
</gene>
<dbReference type="EC" id="2.4.1.123"/>
<dbReference type="EMBL" id="AJ237693">
    <property type="protein sequence ID" value="CAB51533.1"/>
    <property type="molecule type" value="mRNA"/>
</dbReference>
<dbReference type="SMR" id="Q9XGN4"/>
<dbReference type="CAZy" id="GT8">
    <property type="family name" value="Glycosyltransferase Family 8"/>
</dbReference>
<dbReference type="BRENDA" id="2.4.1.123">
    <property type="organism ID" value="222"/>
</dbReference>
<dbReference type="GO" id="GO:0005737">
    <property type="term" value="C:cytoplasm"/>
    <property type="evidence" value="ECO:0007669"/>
    <property type="project" value="UniProtKB-SubCell"/>
</dbReference>
<dbReference type="GO" id="GO:0047216">
    <property type="term" value="F:inositol 3-alpha-galactosyltransferase activity"/>
    <property type="evidence" value="ECO:0000314"/>
    <property type="project" value="UniProtKB"/>
</dbReference>
<dbReference type="GO" id="GO:0046872">
    <property type="term" value="F:metal ion binding"/>
    <property type="evidence" value="ECO:0007669"/>
    <property type="project" value="UniProtKB-KW"/>
</dbReference>
<dbReference type="GO" id="GO:0052576">
    <property type="term" value="P:carbohydrate storage"/>
    <property type="evidence" value="ECO:0000314"/>
    <property type="project" value="UniProtKB"/>
</dbReference>
<dbReference type="GO" id="GO:0070417">
    <property type="term" value="P:cellular response to cold"/>
    <property type="evidence" value="ECO:0000270"/>
    <property type="project" value="UniProtKB"/>
</dbReference>
<dbReference type="GO" id="GO:0006012">
    <property type="term" value="P:galactose metabolic process"/>
    <property type="evidence" value="ECO:0007669"/>
    <property type="project" value="UniProtKB-KW"/>
</dbReference>
<dbReference type="GO" id="GO:0010325">
    <property type="term" value="P:raffinose family oligosaccharide biosynthetic process"/>
    <property type="evidence" value="ECO:0000314"/>
    <property type="project" value="UniProtKB"/>
</dbReference>
<dbReference type="CDD" id="cd02537">
    <property type="entry name" value="GT8_Glycogenin"/>
    <property type="match status" value="1"/>
</dbReference>
<dbReference type="FunFam" id="3.90.550.10:FF:000049">
    <property type="entry name" value="Hexosyltransferase"/>
    <property type="match status" value="1"/>
</dbReference>
<dbReference type="Gene3D" id="3.90.550.10">
    <property type="entry name" value="Spore Coat Polysaccharide Biosynthesis Protein SpsA, Chain A"/>
    <property type="match status" value="1"/>
</dbReference>
<dbReference type="InterPro" id="IPR002495">
    <property type="entry name" value="Glyco_trans_8"/>
</dbReference>
<dbReference type="InterPro" id="IPR050587">
    <property type="entry name" value="GNT1/Glycosyltrans_8"/>
</dbReference>
<dbReference type="InterPro" id="IPR029044">
    <property type="entry name" value="Nucleotide-diphossugar_trans"/>
</dbReference>
<dbReference type="PANTHER" id="PTHR11183">
    <property type="entry name" value="GLYCOGENIN SUBFAMILY MEMBER"/>
    <property type="match status" value="1"/>
</dbReference>
<dbReference type="Pfam" id="PF01501">
    <property type="entry name" value="Glyco_transf_8"/>
    <property type="match status" value="1"/>
</dbReference>
<dbReference type="SUPFAM" id="SSF53448">
    <property type="entry name" value="Nucleotide-diphospho-sugar transferases"/>
    <property type="match status" value="1"/>
</dbReference>
<name>GOLS1_AJURE</name>
<evidence type="ECO:0000250" key="1"/>
<evidence type="ECO:0000269" key="2">
    <source>
    </source>
</evidence>
<evidence type="ECO:0000305" key="3"/>
<comment type="function">
    <text evidence="2">Major galactinol synthase mainly involved in the biosynthesis of storage raffinose family oligosaccharides (RFOs) that function as osmoprotectants. May promote plant stress tolerance.</text>
</comment>
<comment type="catalytic activity">
    <reaction evidence="2">
        <text>myo-inositol + UDP-alpha-D-galactose = alpha-D-galactosyl-(1-&gt;3)-1D-myo-inositol + UDP + H(+)</text>
        <dbReference type="Rhea" id="RHEA:12464"/>
        <dbReference type="ChEBI" id="CHEBI:15378"/>
        <dbReference type="ChEBI" id="CHEBI:17268"/>
        <dbReference type="ChEBI" id="CHEBI:17505"/>
        <dbReference type="ChEBI" id="CHEBI:58223"/>
        <dbReference type="ChEBI" id="CHEBI:66914"/>
        <dbReference type="EC" id="2.4.1.123"/>
    </reaction>
</comment>
<comment type="cofactor">
    <cofactor evidence="1">
        <name>a divalent metal cation</name>
        <dbReference type="ChEBI" id="CHEBI:60240"/>
    </cofactor>
</comment>
<comment type="subcellular location">
    <subcellularLocation>
        <location evidence="3">Cytoplasm</location>
    </subcellularLocation>
</comment>
<comment type="tissue specificity">
    <text evidence="2">Expressed in source leaves, specifically in the mesophyll.</text>
</comment>
<comment type="induction">
    <text evidence="2">By cold. Follows a circadian rhythm; accumulates mostly at midday during the light phase.</text>
</comment>
<comment type="similarity">
    <text evidence="3">Belongs to the glycosyltransferase 8 family. Galactosyltransferase subfamily.</text>
</comment>
<organism>
    <name type="scientific">Ajuga reptans</name>
    <name type="common">Bugle</name>
    <dbReference type="NCBI Taxonomy" id="38596"/>
    <lineage>
        <taxon>Eukaryota</taxon>
        <taxon>Viridiplantae</taxon>
        <taxon>Streptophyta</taxon>
        <taxon>Embryophyta</taxon>
        <taxon>Tracheophyta</taxon>
        <taxon>Spermatophyta</taxon>
        <taxon>Magnoliopsida</taxon>
        <taxon>eudicotyledons</taxon>
        <taxon>Gunneridae</taxon>
        <taxon>Pentapetalae</taxon>
        <taxon>asterids</taxon>
        <taxon>lamiids</taxon>
        <taxon>Lamiales</taxon>
        <taxon>Lamiaceae</taxon>
        <taxon>Ajugoideae</taxon>
        <taxon>Ajugeae</taxon>
        <taxon>Ajuga</taxon>
    </lineage>
</organism>
<proteinExistence type="evidence at protein level"/>
<feature type="chain" id="PRO_0000418655" description="Galactinol synthase 1">
    <location>
        <begin position="1"/>
        <end position="333"/>
    </location>
</feature>
<feature type="active site" evidence="1">
    <location>
        <position position="104"/>
    </location>
</feature>
<feature type="binding site" evidence="1">
    <location>
        <position position="120"/>
    </location>
    <ligand>
        <name>Mn(2+)</name>
        <dbReference type="ChEBI" id="CHEBI:29035"/>
    </ligand>
</feature>
<feature type="binding site" evidence="1">
    <location>
        <position position="122"/>
    </location>
    <ligand>
        <name>Mn(2+)</name>
        <dbReference type="ChEBI" id="CHEBI:29035"/>
    </ligand>
</feature>
<feature type="binding site" evidence="1">
    <location>
        <position position="257"/>
    </location>
    <ligand>
        <name>Mn(2+)</name>
        <dbReference type="ChEBI" id="CHEBI:29035"/>
    </ligand>
</feature>
<keyword id="KW-0119">Carbohydrate metabolism</keyword>
<keyword id="KW-0963">Cytoplasm</keyword>
<keyword id="KW-0299">Galactose metabolism</keyword>
<keyword id="KW-0328">Glycosyltransferase</keyword>
<keyword id="KW-0464">Manganese</keyword>
<keyword id="KW-0479">Metal-binding</keyword>
<keyword id="KW-0808">Transferase</keyword>
<sequence>MGPVVPVEAFRSAGKISALGAKKGYVTFLAGNGDYVKGVVGLAKGLRKVKSAYPLVVAILPDVPEEHRELLRSQGCIVKEIEPIYPPANQIQFAMAYYVINYSKLRIWNFEEYSKMVYLDADIQVYENIDHLLDTPDGYFYAVMDCFCEKTWSHSRQFSIGYCQQCPNKVTWPAQMGSPPPLYFNAGMFVFEPSKTTYQTLLHTLRITPPTPFAEQDFLNMFFEPIYKPIPLVYNLVLAMLWRHPENVELEKVQVVHYCAAGSKPWRYTGQEANMDREDIKMLVKKWWDVYNDESLDFKAEDSIAGEETFSMPSFIASLPEPAVSYIPAPSAA</sequence>